<dbReference type="EMBL" id="CP000671">
    <property type="protein sequence ID" value="ABQ97861.1"/>
    <property type="molecule type" value="Genomic_DNA"/>
</dbReference>
<dbReference type="SMR" id="A5UAR0"/>
<dbReference type="KEGG" id="hip:CGSHiEE_01950"/>
<dbReference type="HOGENOM" id="CLU_015803_1_0_6"/>
<dbReference type="GO" id="GO:0005886">
    <property type="term" value="C:plasma membrane"/>
    <property type="evidence" value="ECO:0007669"/>
    <property type="project" value="UniProtKB-SubCell"/>
</dbReference>
<dbReference type="GO" id="GO:0015385">
    <property type="term" value="F:sodium:proton antiporter activity"/>
    <property type="evidence" value="ECO:0007669"/>
    <property type="project" value="TreeGrafter"/>
</dbReference>
<dbReference type="GO" id="GO:0006885">
    <property type="term" value="P:regulation of pH"/>
    <property type="evidence" value="ECO:0007669"/>
    <property type="project" value="InterPro"/>
</dbReference>
<dbReference type="Gene3D" id="1.20.1530.10">
    <property type="entry name" value="Na+/H+ antiporter like domain"/>
    <property type="match status" value="1"/>
</dbReference>
<dbReference type="HAMAP" id="MF_01844">
    <property type="entry name" value="NhaA"/>
    <property type="match status" value="1"/>
</dbReference>
<dbReference type="InterPro" id="IPR023171">
    <property type="entry name" value="Na/H_antiporter_dom_sf"/>
</dbReference>
<dbReference type="InterPro" id="IPR004670">
    <property type="entry name" value="NhaA"/>
</dbReference>
<dbReference type="NCBIfam" id="TIGR00773">
    <property type="entry name" value="NhaA"/>
    <property type="match status" value="1"/>
</dbReference>
<dbReference type="NCBIfam" id="NF007111">
    <property type="entry name" value="PRK09560.1"/>
    <property type="match status" value="1"/>
</dbReference>
<dbReference type="NCBIfam" id="NF007112">
    <property type="entry name" value="PRK09561.1"/>
    <property type="match status" value="1"/>
</dbReference>
<dbReference type="PANTHER" id="PTHR30341:SF0">
    <property type="entry name" value="NA(+)_H(+) ANTIPORTER NHAA"/>
    <property type="match status" value="1"/>
</dbReference>
<dbReference type="PANTHER" id="PTHR30341">
    <property type="entry name" value="SODIUM ION/PROTON ANTIPORTER NHAA-RELATED"/>
    <property type="match status" value="1"/>
</dbReference>
<dbReference type="Pfam" id="PF06965">
    <property type="entry name" value="Na_H_antiport_1"/>
    <property type="match status" value="1"/>
</dbReference>
<organism>
    <name type="scientific">Haemophilus influenzae (strain PittEE)</name>
    <dbReference type="NCBI Taxonomy" id="374930"/>
    <lineage>
        <taxon>Bacteria</taxon>
        <taxon>Pseudomonadati</taxon>
        <taxon>Pseudomonadota</taxon>
        <taxon>Gammaproteobacteria</taxon>
        <taxon>Pasteurellales</taxon>
        <taxon>Pasteurellaceae</taxon>
        <taxon>Haemophilus</taxon>
    </lineage>
</organism>
<name>NHAA_HAEIE</name>
<proteinExistence type="inferred from homology"/>
<evidence type="ECO:0000255" key="1">
    <source>
        <dbReference type="HAMAP-Rule" id="MF_01844"/>
    </source>
</evidence>
<keyword id="KW-0050">Antiport</keyword>
<keyword id="KW-0997">Cell inner membrane</keyword>
<keyword id="KW-1003">Cell membrane</keyword>
<keyword id="KW-0406">Ion transport</keyword>
<keyword id="KW-0472">Membrane</keyword>
<keyword id="KW-0915">Sodium</keyword>
<keyword id="KW-0739">Sodium transport</keyword>
<keyword id="KW-0812">Transmembrane</keyword>
<keyword id="KW-1133">Transmembrane helix</keyword>
<keyword id="KW-0813">Transport</keyword>
<reference key="1">
    <citation type="journal article" date="2007" name="Genome Biol.">
        <title>Characterization and modeling of the Haemophilus influenzae core and supragenomes based on the complete genomic sequences of Rd and 12 clinical nontypeable strains.</title>
        <authorList>
            <person name="Hogg J.S."/>
            <person name="Hu F.Z."/>
            <person name="Janto B."/>
            <person name="Boissy R."/>
            <person name="Hayes J."/>
            <person name="Keefe R."/>
            <person name="Post J.C."/>
            <person name="Ehrlich G.D."/>
        </authorList>
    </citation>
    <scope>NUCLEOTIDE SEQUENCE [LARGE SCALE GENOMIC DNA]</scope>
    <source>
        <strain>PittEE</strain>
    </source>
</reference>
<protein>
    <recommendedName>
        <fullName evidence="1">Na(+)/H(+) antiporter NhaA</fullName>
    </recommendedName>
    <alternativeName>
        <fullName evidence="1">Sodium/proton antiporter NhaA</fullName>
    </alternativeName>
</protein>
<sequence>MNFLLCIFKGVYVIKLIQRFFKLESAGGILLLFSAVVAMLLANSPLSNQYNDFLNLPVSLQIGSFSINKTLIHWINDGFMAVFFVLVGMEVKKELFEGALSTYQQAIFPAIAAIGGMVIPAVVYWFIAKQDPSLANGWAIPMATDIAFALGIMALLSKQVPLPLKIFLLALAIIDDLGAIVVIALFFSHGLSVQALIFSAVAIIALILLNRFKVSALCAYMVVGAILWASVLKSGVHATLAGVIIGFSIPLKGKKGERPLDDFEHILASWSSFVILPLFAFANAGVSFAGIDVNMISSPLLLAIASGLIIGKPVGIFGFSYISVKLGLAKLPDGINFKQIFAVAVLCGIGFTMSMFLASLAFDANAGESVNTLSRLGILFGSTVSAILGYLFLKQTTKLS</sequence>
<gene>
    <name evidence="1" type="primary">nhaA</name>
    <name type="ordered locus">CGSHiEE_01950</name>
</gene>
<accession>A5UAR0</accession>
<feature type="chain" id="PRO_0000334314" description="Na(+)/H(+) antiporter NhaA">
    <location>
        <begin position="1"/>
        <end position="400"/>
    </location>
</feature>
<feature type="transmembrane region" description="Helical" evidence="1">
    <location>
        <begin position="26"/>
        <end position="46"/>
    </location>
</feature>
<feature type="transmembrane region" description="Helical" evidence="1">
    <location>
        <begin position="71"/>
        <end position="91"/>
    </location>
</feature>
<feature type="transmembrane region" description="Helical" evidence="1">
    <location>
        <begin position="107"/>
        <end position="127"/>
    </location>
</feature>
<feature type="transmembrane region" description="Helical" evidence="1">
    <location>
        <begin position="137"/>
        <end position="157"/>
    </location>
</feature>
<feature type="transmembrane region" description="Helical" evidence="1">
    <location>
        <begin position="166"/>
        <end position="186"/>
    </location>
</feature>
<feature type="transmembrane region" description="Helical" evidence="1">
    <location>
        <begin position="189"/>
        <end position="209"/>
    </location>
</feature>
<feature type="transmembrane region" description="Helical" evidence="1">
    <location>
        <begin position="212"/>
        <end position="232"/>
    </location>
</feature>
<feature type="transmembrane region" description="Helical" evidence="1">
    <location>
        <begin position="233"/>
        <end position="253"/>
    </location>
</feature>
<feature type="transmembrane region" description="Helical" evidence="1">
    <location>
        <begin position="273"/>
        <end position="293"/>
    </location>
</feature>
<feature type="transmembrane region" description="Helical" evidence="1">
    <location>
        <begin position="299"/>
        <end position="319"/>
    </location>
</feature>
<feature type="transmembrane region" description="Helical" evidence="1">
    <location>
        <begin position="340"/>
        <end position="360"/>
    </location>
</feature>
<feature type="transmembrane region" description="Helical" evidence="1">
    <location>
        <begin position="373"/>
        <end position="393"/>
    </location>
</feature>
<comment type="function">
    <text evidence="1">Na(+)/H(+) antiporter that extrudes sodium in exchange for external protons.</text>
</comment>
<comment type="catalytic activity">
    <reaction evidence="1">
        <text>Na(+)(in) + 2 H(+)(out) = Na(+)(out) + 2 H(+)(in)</text>
        <dbReference type="Rhea" id="RHEA:29251"/>
        <dbReference type="ChEBI" id="CHEBI:15378"/>
        <dbReference type="ChEBI" id="CHEBI:29101"/>
    </reaction>
    <physiologicalReaction direction="left-to-right" evidence="1">
        <dbReference type="Rhea" id="RHEA:29252"/>
    </physiologicalReaction>
</comment>
<comment type="subcellular location">
    <subcellularLocation>
        <location evidence="1">Cell inner membrane</location>
        <topology evidence="1">Multi-pass membrane protein</topology>
    </subcellularLocation>
</comment>
<comment type="similarity">
    <text evidence="1">Belongs to the NhaA Na(+)/H(+) (TC 2.A.33) antiporter family.</text>
</comment>